<comment type="function">
    <text evidence="1">Involved in the gluconeogenesis. Catalyzes stereospecifically the conversion of dihydroxyacetone phosphate (DHAP) to D-glyceraldehyde-3-phosphate (G3P).</text>
</comment>
<comment type="catalytic activity">
    <reaction evidence="1">
        <text>D-glyceraldehyde 3-phosphate = dihydroxyacetone phosphate</text>
        <dbReference type="Rhea" id="RHEA:18585"/>
        <dbReference type="ChEBI" id="CHEBI:57642"/>
        <dbReference type="ChEBI" id="CHEBI:59776"/>
        <dbReference type="EC" id="5.3.1.1"/>
    </reaction>
</comment>
<comment type="pathway">
    <text evidence="1">Carbohydrate biosynthesis; gluconeogenesis.</text>
</comment>
<comment type="pathway">
    <text evidence="1">Carbohydrate degradation; glycolysis; D-glyceraldehyde 3-phosphate from glycerone phosphate: step 1/1.</text>
</comment>
<comment type="subunit">
    <text evidence="1">Homodimer.</text>
</comment>
<comment type="subcellular location">
    <subcellularLocation>
        <location evidence="1">Cytoplasm</location>
    </subcellularLocation>
</comment>
<comment type="similarity">
    <text evidence="1">Belongs to the triosephosphate isomerase family.</text>
</comment>
<sequence length="260" mass="28275">MALRRPMVAGNWKMNGSAQLAQELFNKFATKLQDDSVEVVLCPPSIYLESVRQLLDENKETLNGCLVRMGTQNLSQHDFGAYTGEISGQMLKDSGCRYVIIGHSERRRMYGETSNIVAEKFAAAQKHGLTPILCVGESGPAREARRTFEVIAEELDVVIEKNGTMAFDNAIIAYEPLWAVGTGKSATPEQAQEVHAFIRKRLSEVSPFIGENIRILYGGSVTPSNAADLFAQPDVDGGLIGGVSLNATEFLSLCTIAMSA</sequence>
<dbReference type="EC" id="5.3.1.1" evidence="1"/>
<dbReference type="EMBL" id="CP000851">
    <property type="protein sequence ID" value="ABV88381.1"/>
    <property type="molecule type" value="Genomic_DNA"/>
</dbReference>
<dbReference type="RefSeq" id="WP_012156285.1">
    <property type="nucleotide sequence ID" value="NC_009901.1"/>
</dbReference>
<dbReference type="SMR" id="A8H744"/>
<dbReference type="STRING" id="398579.Spea_3064"/>
<dbReference type="KEGG" id="spl:Spea_3064"/>
<dbReference type="eggNOG" id="COG0149">
    <property type="taxonomic scope" value="Bacteria"/>
</dbReference>
<dbReference type="HOGENOM" id="CLU_024251_2_3_6"/>
<dbReference type="OrthoDB" id="9809429at2"/>
<dbReference type="UniPathway" id="UPA00109">
    <property type="reaction ID" value="UER00189"/>
</dbReference>
<dbReference type="UniPathway" id="UPA00138"/>
<dbReference type="Proteomes" id="UP000002608">
    <property type="component" value="Chromosome"/>
</dbReference>
<dbReference type="GO" id="GO:0005829">
    <property type="term" value="C:cytosol"/>
    <property type="evidence" value="ECO:0007669"/>
    <property type="project" value="TreeGrafter"/>
</dbReference>
<dbReference type="GO" id="GO:0004807">
    <property type="term" value="F:triose-phosphate isomerase activity"/>
    <property type="evidence" value="ECO:0007669"/>
    <property type="project" value="UniProtKB-UniRule"/>
</dbReference>
<dbReference type="GO" id="GO:0006094">
    <property type="term" value="P:gluconeogenesis"/>
    <property type="evidence" value="ECO:0007669"/>
    <property type="project" value="UniProtKB-UniRule"/>
</dbReference>
<dbReference type="GO" id="GO:0046166">
    <property type="term" value="P:glyceraldehyde-3-phosphate biosynthetic process"/>
    <property type="evidence" value="ECO:0007669"/>
    <property type="project" value="TreeGrafter"/>
</dbReference>
<dbReference type="GO" id="GO:0019563">
    <property type="term" value="P:glycerol catabolic process"/>
    <property type="evidence" value="ECO:0007669"/>
    <property type="project" value="TreeGrafter"/>
</dbReference>
<dbReference type="GO" id="GO:0006096">
    <property type="term" value="P:glycolytic process"/>
    <property type="evidence" value="ECO:0007669"/>
    <property type="project" value="UniProtKB-UniRule"/>
</dbReference>
<dbReference type="CDD" id="cd00311">
    <property type="entry name" value="TIM"/>
    <property type="match status" value="1"/>
</dbReference>
<dbReference type="FunFam" id="3.20.20.70:FF:000016">
    <property type="entry name" value="Triosephosphate isomerase"/>
    <property type="match status" value="1"/>
</dbReference>
<dbReference type="Gene3D" id="3.20.20.70">
    <property type="entry name" value="Aldolase class I"/>
    <property type="match status" value="1"/>
</dbReference>
<dbReference type="HAMAP" id="MF_00147_B">
    <property type="entry name" value="TIM_B"/>
    <property type="match status" value="1"/>
</dbReference>
<dbReference type="InterPro" id="IPR013785">
    <property type="entry name" value="Aldolase_TIM"/>
</dbReference>
<dbReference type="InterPro" id="IPR035990">
    <property type="entry name" value="TIM_sf"/>
</dbReference>
<dbReference type="InterPro" id="IPR022896">
    <property type="entry name" value="TrioseP_Isoase_bac/euk"/>
</dbReference>
<dbReference type="InterPro" id="IPR000652">
    <property type="entry name" value="Triosephosphate_isomerase"/>
</dbReference>
<dbReference type="InterPro" id="IPR020861">
    <property type="entry name" value="Triosephosphate_isomerase_AS"/>
</dbReference>
<dbReference type="NCBIfam" id="TIGR00419">
    <property type="entry name" value="tim"/>
    <property type="match status" value="1"/>
</dbReference>
<dbReference type="PANTHER" id="PTHR21139">
    <property type="entry name" value="TRIOSEPHOSPHATE ISOMERASE"/>
    <property type="match status" value="1"/>
</dbReference>
<dbReference type="PANTHER" id="PTHR21139:SF42">
    <property type="entry name" value="TRIOSEPHOSPHATE ISOMERASE"/>
    <property type="match status" value="1"/>
</dbReference>
<dbReference type="Pfam" id="PF00121">
    <property type="entry name" value="TIM"/>
    <property type="match status" value="1"/>
</dbReference>
<dbReference type="SUPFAM" id="SSF51351">
    <property type="entry name" value="Triosephosphate isomerase (TIM)"/>
    <property type="match status" value="1"/>
</dbReference>
<dbReference type="PROSITE" id="PS00171">
    <property type="entry name" value="TIM_1"/>
    <property type="match status" value="1"/>
</dbReference>
<dbReference type="PROSITE" id="PS51440">
    <property type="entry name" value="TIM_2"/>
    <property type="match status" value="1"/>
</dbReference>
<protein>
    <recommendedName>
        <fullName evidence="1">Triosephosphate isomerase</fullName>
        <shortName evidence="1">TIM</shortName>
        <shortName evidence="1">TPI</shortName>
        <ecNumber evidence="1">5.3.1.1</ecNumber>
    </recommendedName>
    <alternativeName>
        <fullName evidence="1">Triose-phosphate isomerase</fullName>
    </alternativeName>
</protein>
<reference key="1">
    <citation type="submission" date="2007-10" db="EMBL/GenBank/DDBJ databases">
        <title>Complete sequence of Shewanella pealeana ATCC 700345.</title>
        <authorList>
            <consortium name="US DOE Joint Genome Institute"/>
            <person name="Copeland A."/>
            <person name="Lucas S."/>
            <person name="Lapidus A."/>
            <person name="Barry K."/>
            <person name="Glavina del Rio T."/>
            <person name="Dalin E."/>
            <person name="Tice H."/>
            <person name="Pitluck S."/>
            <person name="Chertkov O."/>
            <person name="Brettin T."/>
            <person name="Bruce D."/>
            <person name="Detter J.C."/>
            <person name="Han C."/>
            <person name="Schmutz J."/>
            <person name="Larimer F."/>
            <person name="Land M."/>
            <person name="Hauser L."/>
            <person name="Kyrpides N."/>
            <person name="Kim E."/>
            <person name="Zhao J.-S.Z."/>
            <person name="Manno D."/>
            <person name="Hawari J."/>
            <person name="Richardson P."/>
        </authorList>
    </citation>
    <scope>NUCLEOTIDE SEQUENCE [LARGE SCALE GENOMIC DNA]</scope>
    <source>
        <strain>ATCC 700345 / ANG-SQ1</strain>
    </source>
</reference>
<proteinExistence type="inferred from homology"/>
<gene>
    <name evidence="1" type="primary">tpiA</name>
    <name type="ordered locus">Spea_3064</name>
</gene>
<evidence type="ECO:0000255" key="1">
    <source>
        <dbReference type="HAMAP-Rule" id="MF_00147"/>
    </source>
</evidence>
<name>TPIS_SHEPA</name>
<feature type="chain" id="PRO_1000076661" description="Triosephosphate isomerase">
    <location>
        <begin position="1"/>
        <end position="260"/>
    </location>
</feature>
<feature type="active site" description="Electrophile" evidence="1">
    <location>
        <position position="103"/>
    </location>
</feature>
<feature type="active site" description="Proton acceptor" evidence="1">
    <location>
        <position position="175"/>
    </location>
</feature>
<feature type="binding site" evidence="1">
    <location>
        <begin position="11"/>
        <end position="13"/>
    </location>
    <ligand>
        <name>substrate</name>
    </ligand>
</feature>
<feature type="binding site" evidence="1">
    <location>
        <position position="181"/>
    </location>
    <ligand>
        <name>substrate</name>
    </ligand>
</feature>
<feature type="binding site" evidence="1">
    <location>
        <position position="220"/>
    </location>
    <ligand>
        <name>substrate</name>
    </ligand>
</feature>
<feature type="binding site" evidence="1">
    <location>
        <begin position="241"/>
        <end position="242"/>
    </location>
    <ligand>
        <name>substrate</name>
    </ligand>
</feature>
<keyword id="KW-0963">Cytoplasm</keyword>
<keyword id="KW-0312">Gluconeogenesis</keyword>
<keyword id="KW-0324">Glycolysis</keyword>
<keyword id="KW-0413">Isomerase</keyword>
<keyword id="KW-1185">Reference proteome</keyword>
<accession>A8H744</accession>
<organism>
    <name type="scientific">Shewanella pealeana (strain ATCC 700345 / ANG-SQ1)</name>
    <dbReference type="NCBI Taxonomy" id="398579"/>
    <lineage>
        <taxon>Bacteria</taxon>
        <taxon>Pseudomonadati</taxon>
        <taxon>Pseudomonadota</taxon>
        <taxon>Gammaproteobacteria</taxon>
        <taxon>Alteromonadales</taxon>
        <taxon>Shewanellaceae</taxon>
        <taxon>Shewanella</taxon>
    </lineage>
</organism>